<protein>
    <recommendedName>
        <fullName>Dihydrolipoyllysine-residue succinyltransferase component of 2-oxoglutarate dehydrogenase complex</fullName>
        <ecNumber evidence="2">2.3.1.61</ecNumber>
    </recommendedName>
    <alternativeName>
        <fullName>2-oxoglutarate dehydrogenase complex component E2</fullName>
        <shortName>OGDC-E2</shortName>
    </alternativeName>
    <alternativeName>
        <fullName>Dihydrolipoamide succinyltransferase component of 2-oxoglutarate dehydrogenase complex</fullName>
    </alternativeName>
</protein>
<gene>
    <name type="primary">odhB</name>
    <name type="synonym">citM</name>
    <name type="ordered locus">BSU19360</name>
</gene>
<evidence type="ECO:0000250" key="1"/>
<evidence type="ECO:0000250" key="2">
    <source>
        <dbReference type="UniProtKB" id="P0AFG6"/>
    </source>
</evidence>
<evidence type="ECO:0000255" key="3">
    <source>
        <dbReference type="PROSITE-ProRule" id="PRU01066"/>
    </source>
</evidence>
<evidence type="ECO:0000255" key="4">
    <source>
        <dbReference type="PROSITE-ProRule" id="PRU01170"/>
    </source>
</evidence>
<evidence type="ECO:0000256" key="5">
    <source>
        <dbReference type="SAM" id="MobiDB-lite"/>
    </source>
</evidence>
<evidence type="ECO:0000305" key="6"/>
<sequence>MAEIKVPELAESISEGTIAQWLKQPGDYVEQGEYLLELETDKVNVELTAEESGVLQEVLKDSGDTVQVGEIIGTISEGAGESSAPAPTEKTESKESVKEEKQAEPAAQEVSEEAQSEAKSRTIASPSARKLAREKGIDLSQVPTGDPLGRVRKQDVEAYEKPASKPAPQQKQQPQAQKAQQSFDKPVEVQKMSRRRQTIAKRLVEVQQTSAMLTTFNEVDMTAVMNLRKRRKDQFFEQNEVKLGFMSFFTKAVVAALKKYPLLNAEIQGDELIVKKFYDIGIAVAADEGLVVPVVRDADRLTFAGIEKEIGELAKKARNNKLTLSELQGGSFTITNGGTFGSLMSTPILNSPQVGILGMHKIQLRPVAIDEERFENRPMMYIALSYDHRIVDGKEAVGFLVTIKNLLEDPEQLLLEG</sequence>
<reference key="1">
    <citation type="journal article" date="1989" name="J. Bacteriol.">
        <title>Genetic characterization of Bacillus subtilis odhA and odhB, encoding 2-oxoglutarate dehydrogenase and dihydrolipoamide transsuccinylase, respectively.</title>
        <authorList>
            <person name="Carlsson P."/>
            <person name="Hederstedt L."/>
        </authorList>
    </citation>
    <scope>NUCLEOTIDE SEQUENCE [GENOMIC DNA]</scope>
</reference>
<reference key="2">
    <citation type="journal article" date="1997" name="Nature">
        <title>The complete genome sequence of the Gram-positive bacterium Bacillus subtilis.</title>
        <authorList>
            <person name="Kunst F."/>
            <person name="Ogasawara N."/>
            <person name="Moszer I."/>
            <person name="Albertini A.M."/>
            <person name="Alloni G."/>
            <person name="Azevedo V."/>
            <person name="Bertero M.G."/>
            <person name="Bessieres P."/>
            <person name="Bolotin A."/>
            <person name="Borchert S."/>
            <person name="Borriss R."/>
            <person name="Boursier L."/>
            <person name="Brans A."/>
            <person name="Braun M."/>
            <person name="Brignell S.C."/>
            <person name="Bron S."/>
            <person name="Brouillet S."/>
            <person name="Bruschi C.V."/>
            <person name="Caldwell B."/>
            <person name="Capuano V."/>
            <person name="Carter N.M."/>
            <person name="Choi S.-K."/>
            <person name="Codani J.-J."/>
            <person name="Connerton I.F."/>
            <person name="Cummings N.J."/>
            <person name="Daniel R.A."/>
            <person name="Denizot F."/>
            <person name="Devine K.M."/>
            <person name="Duesterhoeft A."/>
            <person name="Ehrlich S.D."/>
            <person name="Emmerson P.T."/>
            <person name="Entian K.-D."/>
            <person name="Errington J."/>
            <person name="Fabret C."/>
            <person name="Ferrari E."/>
            <person name="Foulger D."/>
            <person name="Fritz C."/>
            <person name="Fujita M."/>
            <person name="Fujita Y."/>
            <person name="Fuma S."/>
            <person name="Galizzi A."/>
            <person name="Galleron N."/>
            <person name="Ghim S.-Y."/>
            <person name="Glaser P."/>
            <person name="Goffeau A."/>
            <person name="Golightly E.J."/>
            <person name="Grandi G."/>
            <person name="Guiseppi G."/>
            <person name="Guy B.J."/>
            <person name="Haga K."/>
            <person name="Haiech J."/>
            <person name="Harwood C.R."/>
            <person name="Henaut A."/>
            <person name="Hilbert H."/>
            <person name="Holsappel S."/>
            <person name="Hosono S."/>
            <person name="Hullo M.-F."/>
            <person name="Itaya M."/>
            <person name="Jones L.-M."/>
            <person name="Joris B."/>
            <person name="Karamata D."/>
            <person name="Kasahara Y."/>
            <person name="Klaerr-Blanchard M."/>
            <person name="Klein C."/>
            <person name="Kobayashi Y."/>
            <person name="Koetter P."/>
            <person name="Koningstein G."/>
            <person name="Krogh S."/>
            <person name="Kumano M."/>
            <person name="Kurita K."/>
            <person name="Lapidus A."/>
            <person name="Lardinois S."/>
            <person name="Lauber J."/>
            <person name="Lazarevic V."/>
            <person name="Lee S.-M."/>
            <person name="Levine A."/>
            <person name="Liu H."/>
            <person name="Masuda S."/>
            <person name="Mauel C."/>
            <person name="Medigue C."/>
            <person name="Medina N."/>
            <person name="Mellado R.P."/>
            <person name="Mizuno M."/>
            <person name="Moestl D."/>
            <person name="Nakai S."/>
            <person name="Noback M."/>
            <person name="Noone D."/>
            <person name="O'Reilly M."/>
            <person name="Ogawa K."/>
            <person name="Ogiwara A."/>
            <person name="Oudega B."/>
            <person name="Park S.-H."/>
            <person name="Parro V."/>
            <person name="Pohl T.M."/>
            <person name="Portetelle D."/>
            <person name="Porwollik S."/>
            <person name="Prescott A.M."/>
            <person name="Presecan E."/>
            <person name="Pujic P."/>
            <person name="Purnelle B."/>
            <person name="Rapoport G."/>
            <person name="Rey M."/>
            <person name="Reynolds S."/>
            <person name="Rieger M."/>
            <person name="Rivolta C."/>
            <person name="Rocha E."/>
            <person name="Roche B."/>
            <person name="Rose M."/>
            <person name="Sadaie Y."/>
            <person name="Sato T."/>
            <person name="Scanlan E."/>
            <person name="Schleich S."/>
            <person name="Schroeter R."/>
            <person name="Scoffone F."/>
            <person name="Sekiguchi J."/>
            <person name="Sekowska A."/>
            <person name="Seror S.J."/>
            <person name="Serror P."/>
            <person name="Shin B.-S."/>
            <person name="Soldo B."/>
            <person name="Sorokin A."/>
            <person name="Tacconi E."/>
            <person name="Takagi T."/>
            <person name="Takahashi H."/>
            <person name="Takemaru K."/>
            <person name="Takeuchi M."/>
            <person name="Tamakoshi A."/>
            <person name="Tanaka T."/>
            <person name="Terpstra P."/>
            <person name="Tognoni A."/>
            <person name="Tosato V."/>
            <person name="Uchiyama S."/>
            <person name="Vandenbol M."/>
            <person name="Vannier F."/>
            <person name="Vassarotti A."/>
            <person name="Viari A."/>
            <person name="Wambutt R."/>
            <person name="Wedler E."/>
            <person name="Wedler H."/>
            <person name="Weitzenegger T."/>
            <person name="Winters P."/>
            <person name="Wipat A."/>
            <person name="Yamamoto H."/>
            <person name="Yamane K."/>
            <person name="Yasumoto K."/>
            <person name="Yata K."/>
            <person name="Yoshida K."/>
            <person name="Yoshikawa H.-F."/>
            <person name="Zumstein E."/>
            <person name="Yoshikawa H."/>
            <person name="Danchin A."/>
        </authorList>
    </citation>
    <scope>NUCLEOTIDE SEQUENCE [LARGE SCALE GENOMIC DNA]</scope>
    <source>
        <strain>168</strain>
    </source>
</reference>
<reference key="3">
    <citation type="journal article" date="2009" name="Microbiology">
        <title>From a consortium sequence to a unified sequence: the Bacillus subtilis 168 reference genome a decade later.</title>
        <authorList>
            <person name="Barbe V."/>
            <person name="Cruveiller S."/>
            <person name="Kunst F."/>
            <person name="Lenoble P."/>
            <person name="Meurice G."/>
            <person name="Sekowska A."/>
            <person name="Vallenet D."/>
            <person name="Wang T."/>
            <person name="Moszer I."/>
            <person name="Medigue C."/>
            <person name="Danchin A."/>
        </authorList>
    </citation>
    <scope>SEQUENCE REVISION TO 287 AND 328</scope>
</reference>
<proteinExistence type="inferred from homology"/>
<feature type="chain" id="PRO_0000162256" description="Dihydrolipoyllysine-residue succinyltransferase component of 2-oxoglutarate dehydrogenase complex">
    <location>
        <begin position="1"/>
        <end position="417"/>
    </location>
</feature>
<feature type="domain" description="Lipoyl-binding" evidence="3">
    <location>
        <begin position="1"/>
        <end position="76"/>
    </location>
</feature>
<feature type="domain" description="Peripheral subunit-binding (PSBD)" evidence="4">
    <location>
        <begin position="123"/>
        <end position="160"/>
    </location>
</feature>
<feature type="region of interest" description="Disordered" evidence="5">
    <location>
        <begin position="75"/>
        <end position="191"/>
    </location>
</feature>
<feature type="compositionally biased region" description="Basic and acidic residues" evidence="5">
    <location>
        <begin position="89"/>
        <end position="103"/>
    </location>
</feature>
<feature type="compositionally biased region" description="Basic and acidic residues" evidence="5">
    <location>
        <begin position="152"/>
        <end position="163"/>
    </location>
</feature>
<feature type="compositionally biased region" description="Low complexity" evidence="5">
    <location>
        <begin position="164"/>
        <end position="182"/>
    </location>
</feature>
<feature type="active site" evidence="2">
    <location>
        <position position="388"/>
    </location>
</feature>
<feature type="active site" evidence="2">
    <location>
        <position position="392"/>
    </location>
</feature>
<feature type="modified residue" description="N6-lipoyllysine" evidence="3">
    <location>
        <position position="42"/>
    </location>
</feature>
<feature type="sequence conflict" description="In Ref. 1; AAA22629." evidence="6" ref="1">
    <original>D</original>
    <variation>V</variation>
    <location>
        <position position="287"/>
    </location>
</feature>
<feature type="sequence conflict" description="In Ref. 1; AAA22629." evidence="6" ref="1">
    <original>Q</original>
    <variation>E</variation>
    <location>
        <position position="328"/>
    </location>
</feature>
<comment type="function">
    <text evidence="2">E2 component of the 2-oxoglutarate dehydrogenase (OGDH) complex which catalyzes the second step in the conversion of 2-oxoglutarate to succinyl-CoA and CO(2).</text>
</comment>
<comment type="catalytic activity">
    <reaction evidence="2">
        <text>N(6)-[(R)-dihydrolipoyl]-L-lysyl-[protein] + succinyl-CoA = N(6)-[(R)-S(8)-succinyldihydrolipoyl]-L-lysyl-[protein] + CoA</text>
        <dbReference type="Rhea" id="RHEA:15213"/>
        <dbReference type="Rhea" id="RHEA-COMP:10475"/>
        <dbReference type="Rhea" id="RHEA-COMP:20092"/>
        <dbReference type="ChEBI" id="CHEBI:57287"/>
        <dbReference type="ChEBI" id="CHEBI:57292"/>
        <dbReference type="ChEBI" id="CHEBI:83100"/>
        <dbReference type="ChEBI" id="CHEBI:83120"/>
        <dbReference type="EC" id="2.3.1.61"/>
    </reaction>
</comment>
<comment type="cofactor">
    <cofactor evidence="1">
        <name>(R)-lipoate</name>
        <dbReference type="ChEBI" id="CHEBI:83088"/>
    </cofactor>
    <text evidence="1">Binds 1 lipoyl cofactor covalently.</text>
</comment>
<comment type="pathway">
    <text>Amino-acid degradation; L-lysine degradation via saccharopine pathway; glutaryl-CoA from L-lysine: step 6/6.</text>
</comment>
<comment type="subunit">
    <text evidence="2">Forms a 24-polypeptide structural core with octahedral symmetry. Part of the 2-oxoglutarate dehydrogenase (OGDH) complex composed of E1 (2-oxoglutarate dehydrogenase), E2 (dihydrolipoamide succinyltransferase) and E3 (dihydrolipoamide dehydrogenase); the complex contains multiple copies of the three enzymatic components (E1, E2 and E3).</text>
</comment>
<comment type="similarity">
    <text evidence="6">Belongs to the 2-oxoacid dehydrogenase family.</text>
</comment>
<dbReference type="EC" id="2.3.1.61" evidence="2"/>
<dbReference type="EMBL" id="M27141">
    <property type="protein sequence ID" value="AAA22629.1"/>
    <property type="molecule type" value="Genomic_DNA"/>
</dbReference>
<dbReference type="EMBL" id="AL009126">
    <property type="protein sequence ID" value="CAB13828.2"/>
    <property type="molecule type" value="Genomic_DNA"/>
</dbReference>
<dbReference type="PIR" id="B32879">
    <property type="entry name" value="B32879"/>
</dbReference>
<dbReference type="RefSeq" id="NP_389818.2">
    <property type="nucleotide sequence ID" value="NC_000964.3"/>
</dbReference>
<dbReference type="RefSeq" id="WP_004399364.1">
    <property type="nucleotide sequence ID" value="NZ_OZ025638.1"/>
</dbReference>
<dbReference type="SMR" id="P16263"/>
<dbReference type="FunCoup" id="P16263">
    <property type="interactions" value="620"/>
</dbReference>
<dbReference type="STRING" id="224308.BSU19360"/>
<dbReference type="jPOST" id="P16263"/>
<dbReference type="PaxDb" id="224308-BSU19360"/>
<dbReference type="EnsemblBacteria" id="CAB13828">
    <property type="protein sequence ID" value="CAB13828"/>
    <property type="gene ID" value="BSU_19360"/>
</dbReference>
<dbReference type="GeneID" id="939505"/>
<dbReference type="KEGG" id="bsu:BSU19360"/>
<dbReference type="PATRIC" id="fig|224308.179.peg.2117"/>
<dbReference type="eggNOG" id="COG0508">
    <property type="taxonomic scope" value="Bacteria"/>
</dbReference>
<dbReference type="InParanoid" id="P16263"/>
<dbReference type="OrthoDB" id="9805770at2"/>
<dbReference type="PhylomeDB" id="P16263"/>
<dbReference type="BioCyc" id="BSUB:BSU19360-MONOMER"/>
<dbReference type="BRENDA" id="2.3.1.61">
    <property type="organism ID" value="658"/>
</dbReference>
<dbReference type="UniPathway" id="UPA00868">
    <property type="reaction ID" value="UER00840"/>
</dbReference>
<dbReference type="Proteomes" id="UP000001570">
    <property type="component" value="Chromosome"/>
</dbReference>
<dbReference type="GO" id="GO:0005829">
    <property type="term" value="C:cytosol"/>
    <property type="evidence" value="ECO:0000318"/>
    <property type="project" value="GO_Central"/>
</dbReference>
<dbReference type="GO" id="GO:0045252">
    <property type="term" value="C:oxoglutarate dehydrogenase complex"/>
    <property type="evidence" value="ECO:0007669"/>
    <property type="project" value="InterPro"/>
</dbReference>
<dbReference type="GO" id="GO:0004149">
    <property type="term" value="F:dihydrolipoyllysine-residue succinyltransferase activity"/>
    <property type="evidence" value="ECO:0000318"/>
    <property type="project" value="GO_Central"/>
</dbReference>
<dbReference type="GO" id="GO:0033512">
    <property type="term" value="P:L-lysine catabolic process to acetyl-CoA via saccharopine"/>
    <property type="evidence" value="ECO:0007669"/>
    <property type="project" value="UniProtKB-UniPathway"/>
</dbReference>
<dbReference type="GO" id="GO:0006099">
    <property type="term" value="P:tricarboxylic acid cycle"/>
    <property type="evidence" value="ECO:0000318"/>
    <property type="project" value="GO_Central"/>
</dbReference>
<dbReference type="CDD" id="cd06849">
    <property type="entry name" value="lipoyl_domain"/>
    <property type="match status" value="1"/>
</dbReference>
<dbReference type="FunFam" id="3.30.559.10:FF:000007">
    <property type="entry name" value="Dihydrolipoamide acetyltransferase component of pyruvate dehydrogenase complex"/>
    <property type="match status" value="1"/>
</dbReference>
<dbReference type="Gene3D" id="2.40.50.100">
    <property type="match status" value="1"/>
</dbReference>
<dbReference type="Gene3D" id="3.30.559.10">
    <property type="entry name" value="Chloramphenicol acetyltransferase-like domain"/>
    <property type="match status" value="1"/>
</dbReference>
<dbReference type="Gene3D" id="4.10.320.10">
    <property type="entry name" value="E3-binding domain"/>
    <property type="match status" value="1"/>
</dbReference>
<dbReference type="InterPro" id="IPR003016">
    <property type="entry name" value="2-oxoA_DH_lipoyl-BS"/>
</dbReference>
<dbReference type="InterPro" id="IPR050537">
    <property type="entry name" value="2-oxoacid_dehydrogenase"/>
</dbReference>
<dbReference type="InterPro" id="IPR001078">
    <property type="entry name" value="2-oxoacid_DH_actylTfrase"/>
</dbReference>
<dbReference type="InterPro" id="IPR000089">
    <property type="entry name" value="Biotin_lipoyl"/>
</dbReference>
<dbReference type="InterPro" id="IPR023213">
    <property type="entry name" value="CAT-like_dom_sf"/>
</dbReference>
<dbReference type="InterPro" id="IPR036625">
    <property type="entry name" value="E3-bd_dom_sf"/>
</dbReference>
<dbReference type="InterPro" id="IPR004167">
    <property type="entry name" value="PSBD"/>
</dbReference>
<dbReference type="InterPro" id="IPR011053">
    <property type="entry name" value="Single_hybrid_motif"/>
</dbReference>
<dbReference type="InterPro" id="IPR006255">
    <property type="entry name" value="SucB"/>
</dbReference>
<dbReference type="NCBIfam" id="NF004309">
    <property type="entry name" value="PRK05704.1"/>
    <property type="match status" value="1"/>
</dbReference>
<dbReference type="NCBIfam" id="TIGR01347">
    <property type="entry name" value="sucB"/>
    <property type="match status" value="1"/>
</dbReference>
<dbReference type="PANTHER" id="PTHR43416:SF5">
    <property type="entry name" value="DIHYDROLIPOYLLYSINE-RESIDUE SUCCINYLTRANSFERASE COMPONENT OF 2-OXOGLUTARATE DEHYDROGENASE COMPLEX, MITOCHONDRIAL"/>
    <property type="match status" value="1"/>
</dbReference>
<dbReference type="PANTHER" id="PTHR43416">
    <property type="entry name" value="DIHYDROLIPOYLLYSINE-RESIDUE SUCCINYLTRANSFERASE COMPONENT OF 2-OXOGLUTARATE DEHYDROGENASE COMPLEX, MITOCHONDRIAL-RELATED"/>
    <property type="match status" value="1"/>
</dbReference>
<dbReference type="Pfam" id="PF00198">
    <property type="entry name" value="2-oxoacid_dh"/>
    <property type="match status" value="1"/>
</dbReference>
<dbReference type="Pfam" id="PF00364">
    <property type="entry name" value="Biotin_lipoyl"/>
    <property type="match status" value="1"/>
</dbReference>
<dbReference type="Pfam" id="PF02817">
    <property type="entry name" value="E3_binding"/>
    <property type="match status" value="1"/>
</dbReference>
<dbReference type="SUPFAM" id="SSF52777">
    <property type="entry name" value="CoA-dependent acyltransferases"/>
    <property type="match status" value="1"/>
</dbReference>
<dbReference type="SUPFAM" id="SSF47005">
    <property type="entry name" value="Peripheral subunit-binding domain of 2-oxo acid dehydrogenase complex"/>
    <property type="match status" value="1"/>
</dbReference>
<dbReference type="SUPFAM" id="SSF51230">
    <property type="entry name" value="Single hybrid motif"/>
    <property type="match status" value="1"/>
</dbReference>
<dbReference type="PROSITE" id="PS50968">
    <property type="entry name" value="BIOTINYL_LIPOYL"/>
    <property type="match status" value="1"/>
</dbReference>
<dbReference type="PROSITE" id="PS00189">
    <property type="entry name" value="LIPOYL"/>
    <property type="match status" value="1"/>
</dbReference>
<dbReference type="PROSITE" id="PS51826">
    <property type="entry name" value="PSBD"/>
    <property type="match status" value="1"/>
</dbReference>
<organism>
    <name type="scientific">Bacillus subtilis (strain 168)</name>
    <dbReference type="NCBI Taxonomy" id="224308"/>
    <lineage>
        <taxon>Bacteria</taxon>
        <taxon>Bacillati</taxon>
        <taxon>Bacillota</taxon>
        <taxon>Bacilli</taxon>
        <taxon>Bacillales</taxon>
        <taxon>Bacillaceae</taxon>
        <taxon>Bacillus</taxon>
    </lineage>
</organism>
<keyword id="KW-0012">Acyltransferase</keyword>
<keyword id="KW-0450">Lipoyl</keyword>
<keyword id="KW-1185">Reference proteome</keyword>
<keyword id="KW-0808">Transferase</keyword>
<keyword id="KW-0816">Tricarboxylic acid cycle</keyword>
<name>ODO2_BACSU</name>
<accession>P16263</accession>